<accession>B2AGT7</accession>
<keyword id="KW-0687">Ribonucleoprotein</keyword>
<keyword id="KW-0689">Ribosomal protein</keyword>
<keyword id="KW-0694">RNA-binding</keyword>
<keyword id="KW-0699">rRNA-binding</keyword>
<proteinExistence type="inferred from homology"/>
<comment type="function">
    <text evidence="1">This is one of the proteins that binds to the 5S RNA in the ribosome where it forms part of the central protuberance.</text>
</comment>
<comment type="subunit">
    <text evidence="1">Part of the 50S ribosomal subunit; part of the 5S rRNA/L5/L18/L25 subcomplex. Contacts the 5S rRNA. Binds to the 5S rRNA independently of L5 and L18.</text>
</comment>
<comment type="similarity">
    <text evidence="1">Belongs to the bacterial ribosomal protein bL25 family. CTC subfamily.</text>
</comment>
<protein>
    <recommendedName>
        <fullName evidence="1">Large ribosomal subunit protein bL25</fullName>
    </recommendedName>
    <alternativeName>
        <fullName evidence="3">50S ribosomal protein L25</fullName>
    </alternativeName>
    <alternativeName>
        <fullName evidence="1">General stress protein CTC</fullName>
    </alternativeName>
</protein>
<feature type="chain" id="PRO_1000142511" description="Large ribosomal subunit protein bL25">
    <location>
        <begin position="1"/>
        <end position="205"/>
    </location>
</feature>
<feature type="region of interest" description="Disordered" evidence="2">
    <location>
        <begin position="185"/>
        <end position="205"/>
    </location>
</feature>
<feature type="compositionally biased region" description="Low complexity" evidence="2">
    <location>
        <begin position="186"/>
        <end position="205"/>
    </location>
</feature>
<name>RL25_CUPTR</name>
<gene>
    <name evidence="1" type="primary">rplY</name>
    <name evidence="1" type="synonym">ctc</name>
    <name type="ordered locus">RALTA_A0316</name>
</gene>
<dbReference type="EMBL" id="CU633749">
    <property type="protein sequence ID" value="CAP62986.1"/>
    <property type="molecule type" value="Genomic_DNA"/>
</dbReference>
<dbReference type="RefSeq" id="WP_012351653.1">
    <property type="nucleotide sequence ID" value="NC_010528.1"/>
</dbReference>
<dbReference type="SMR" id="B2AGT7"/>
<dbReference type="GeneID" id="29762645"/>
<dbReference type="KEGG" id="cti:RALTA_A0316"/>
<dbReference type="eggNOG" id="COG1825">
    <property type="taxonomic scope" value="Bacteria"/>
</dbReference>
<dbReference type="HOGENOM" id="CLU_075939_0_1_4"/>
<dbReference type="BioCyc" id="CTAI977880:RALTA_RS01540-MONOMER"/>
<dbReference type="Proteomes" id="UP000001692">
    <property type="component" value="Chromosome 1"/>
</dbReference>
<dbReference type="GO" id="GO:0022625">
    <property type="term" value="C:cytosolic large ribosomal subunit"/>
    <property type="evidence" value="ECO:0007669"/>
    <property type="project" value="TreeGrafter"/>
</dbReference>
<dbReference type="GO" id="GO:0008097">
    <property type="term" value="F:5S rRNA binding"/>
    <property type="evidence" value="ECO:0007669"/>
    <property type="project" value="InterPro"/>
</dbReference>
<dbReference type="GO" id="GO:0003735">
    <property type="term" value="F:structural constituent of ribosome"/>
    <property type="evidence" value="ECO:0007669"/>
    <property type="project" value="InterPro"/>
</dbReference>
<dbReference type="GO" id="GO:0006412">
    <property type="term" value="P:translation"/>
    <property type="evidence" value="ECO:0007669"/>
    <property type="project" value="UniProtKB-UniRule"/>
</dbReference>
<dbReference type="CDD" id="cd00495">
    <property type="entry name" value="Ribosomal_L25_TL5_CTC"/>
    <property type="match status" value="1"/>
</dbReference>
<dbReference type="Gene3D" id="2.170.120.20">
    <property type="entry name" value="Ribosomal protein L25, beta domain"/>
    <property type="match status" value="1"/>
</dbReference>
<dbReference type="Gene3D" id="2.40.240.10">
    <property type="entry name" value="Ribosomal Protein L25, Chain P"/>
    <property type="match status" value="1"/>
</dbReference>
<dbReference type="HAMAP" id="MF_01336">
    <property type="entry name" value="Ribosomal_bL25"/>
    <property type="match status" value="1"/>
</dbReference>
<dbReference type="HAMAP" id="MF_01334">
    <property type="entry name" value="Ribosomal_bL25_CTC"/>
    <property type="match status" value="1"/>
</dbReference>
<dbReference type="InterPro" id="IPR020056">
    <property type="entry name" value="Rbsml_bL25/Gln-tRNA_synth_N"/>
</dbReference>
<dbReference type="InterPro" id="IPR011035">
    <property type="entry name" value="Ribosomal_bL25/Gln-tRNA_synth"/>
</dbReference>
<dbReference type="InterPro" id="IPR020057">
    <property type="entry name" value="Ribosomal_bL25_b-dom"/>
</dbReference>
<dbReference type="InterPro" id="IPR037121">
    <property type="entry name" value="Ribosomal_bL25_C"/>
</dbReference>
<dbReference type="InterPro" id="IPR001021">
    <property type="entry name" value="Ribosomal_bL25_long"/>
</dbReference>
<dbReference type="InterPro" id="IPR020055">
    <property type="entry name" value="Ribosomal_bL25_short"/>
</dbReference>
<dbReference type="InterPro" id="IPR029751">
    <property type="entry name" value="Ribosomal_L25_dom"/>
</dbReference>
<dbReference type="InterPro" id="IPR020930">
    <property type="entry name" value="Ribosomal_uL5_bac-type"/>
</dbReference>
<dbReference type="NCBIfam" id="TIGR00731">
    <property type="entry name" value="bL25_bact_ctc"/>
    <property type="match status" value="1"/>
</dbReference>
<dbReference type="NCBIfam" id="NF004128">
    <property type="entry name" value="PRK05618.1-2"/>
    <property type="match status" value="1"/>
</dbReference>
<dbReference type="NCBIfam" id="NF004130">
    <property type="entry name" value="PRK05618.1-5"/>
    <property type="match status" value="1"/>
</dbReference>
<dbReference type="NCBIfam" id="NF004612">
    <property type="entry name" value="PRK05943.1"/>
    <property type="match status" value="1"/>
</dbReference>
<dbReference type="PANTHER" id="PTHR33284">
    <property type="entry name" value="RIBOSOMAL PROTEIN L25/GLN-TRNA SYNTHETASE, ANTI-CODON-BINDING DOMAIN-CONTAINING PROTEIN"/>
    <property type="match status" value="1"/>
</dbReference>
<dbReference type="PANTHER" id="PTHR33284:SF1">
    <property type="entry name" value="RIBOSOMAL PROTEIN L25_GLN-TRNA SYNTHETASE, ANTI-CODON-BINDING DOMAIN-CONTAINING PROTEIN"/>
    <property type="match status" value="1"/>
</dbReference>
<dbReference type="Pfam" id="PF01386">
    <property type="entry name" value="Ribosomal_L25p"/>
    <property type="match status" value="1"/>
</dbReference>
<dbReference type="Pfam" id="PF14693">
    <property type="entry name" value="Ribosomal_TL5_C"/>
    <property type="match status" value="1"/>
</dbReference>
<dbReference type="SUPFAM" id="SSF50715">
    <property type="entry name" value="Ribosomal protein L25-like"/>
    <property type="match status" value="1"/>
</dbReference>
<organism>
    <name type="scientific">Cupriavidus taiwanensis (strain DSM 17343 / BCRC 17206 / CCUG 44338 / CIP 107171 / LMG 19424 / R1)</name>
    <name type="common">Ralstonia taiwanensis (strain LMG 19424)</name>
    <dbReference type="NCBI Taxonomy" id="977880"/>
    <lineage>
        <taxon>Bacteria</taxon>
        <taxon>Pseudomonadati</taxon>
        <taxon>Pseudomonadota</taxon>
        <taxon>Betaproteobacteria</taxon>
        <taxon>Burkholderiales</taxon>
        <taxon>Burkholderiaceae</taxon>
        <taxon>Cupriavidus</taxon>
    </lineage>
</organism>
<sequence length="205" mass="21867">MKVVAFERSVQGTGASRRLRNSGKTPGIIYGGAAEPKMIELDHNALWHALKKEAFHSSILDLEVAGKSEKALLRAFQMHPFKPLVLHVDFQRVSANDKIHVKVPLHFMNQETAPGVKLGHGLVNHIVNDLEVSCLPADLPEFIEVDVGAMELGQTLHLSDLKLPKGVTVITHGDDNPAIASISQPAGAVSEAAEGGEAAGETPAA</sequence>
<evidence type="ECO:0000255" key="1">
    <source>
        <dbReference type="HAMAP-Rule" id="MF_01334"/>
    </source>
</evidence>
<evidence type="ECO:0000256" key="2">
    <source>
        <dbReference type="SAM" id="MobiDB-lite"/>
    </source>
</evidence>
<evidence type="ECO:0000305" key="3"/>
<reference key="1">
    <citation type="journal article" date="2008" name="Genome Res.">
        <title>Genome sequence of the beta-rhizobium Cupriavidus taiwanensis and comparative genomics of rhizobia.</title>
        <authorList>
            <person name="Amadou C."/>
            <person name="Pascal G."/>
            <person name="Mangenot S."/>
            <person name="Glew M."/>
            <person name="Bontemps C."/>
            <person name="Capela D."/>
            <person name="Carrere S."/>
            <person name="Cruveiller S."/>
            <person name="Dossat C."/>
            <person name="Lajus A."/>
            <person name="Marchetti M."/>
            <person name="Poinsot V."/>
            <person name="Rouy Z."/>
            <person name="Servin B."/>
            <person name="Saad M."/>
            <person name="Schenowitz C."/>
            <person name="Barbe V."/>
            <person name="Batut J."/>
            <person name="Medigue C."/>
            <person name="Masson-Boivin C."/>
        </authorList>
    </citation>
    <scope>NUCLEOTIDE SEQUENCE [LARGE SCALE GENOMIC DNA]</scope>
    <source>
        <strain>DSM 17343 / BCRC 17206 / CCUG 44338 / CIP 107171 / LMG 19424 / R1</strain>
    </source>
</reference>